<feature type="signal peptide" evidence="2">
    <location>
        <begin position="1"/>
        <end position="19"/>
    </location>
</feature>
<feature type="chain" id="PRO_0000462007" description="Fusion glycoprotein F0">
    <location>
        <begin position="20"/>
        <end position="538"/>
    </location>
</feature>
<feature type="chain" id="PRO_0000462008" description="Fusion glycoprotein F2">
    <location>
        <begin position="20"/>
        <end position="102"/>
    </location>
</feature>
<feature type="chain" id="PRO_0000462009" description="Fusion glycoprotein F1">
    <location>
        <begin position="103"/>
        <end position="538"/>
    </location>
</feature>
<feature type="topological domain" description="Extracellular" evidence="1">
    <location>
        <begin position="20"/>
        <end position="482"/>
    </location>
</feature>
<feature type="transmembrane region" description="Helical" evidence="5">
    <location>
        <begin position="483"/>
        <end position="503"/>
    </location>
</feature>
<feature type="topological domain" description="Cytoplasmic" evidence="1">
    <location>
        <begin position="504"/>
        <end position="538"/>
    </location>
</feature>
<feature type="region of interest" description="Fusion peptide" evidence="4">
    <location>
        <begin position="103"/>
        <end position="127"/>
    </location>
</feature>
<feature type="coiled-coil region" evidence="5">
    <location>
        <begin position="128"/>
        <end position="156"/>
    </location>
</feature>
<feature type="coiled-coil region" evidence="5">
    <location>
        <begin position="452"/>
        <end position="477"/>
    </location>
</feature>
<feature type="site" description="Determinant for fusogenicity and cleavage efficiency" evidence="6">
    <location>
        <position position="95"/>
    </location>
</feature>
<feature type="site" description="Cleavage; by host" evidence="6">
    <location>
        <begin position="102"/>
        <end position="103"/>
    </location>
</feature>
<feature type="glycosylation site" description="N-linked (GlcNAc...) asparagine; by host" evidence="4">
    <location>
        <position position="56"/>
    </location>
</feature>
<feature type="glycosylation site" description="N-linked (GlcNAc...) asparagine; by host" evidence="5">
    <location>
        <position position="73"/>
    </location>
</feature>
<feature type="glycosylation site" description="N-linked (GlcNAc...) asparagine; by host" evidence="5">
    <location>
        <position position="182"/>
    </location>
</feature>
<feature type="glycosylation site" description="N-linked (GlcNAc...) asparagine; by host" evidence="5">
    <location>
        <position position="352"/>
    </location>
</feature>
<feature type="glycosylation site" description="N-linked (GlcNAc...) asparagine; by host" evidence="5">
    <location>
        <position position="427"/>
    </location>
</feature>
<feature type="glycosylation site" description="N-linked (GlcNAc...) asparagine; by host" evidence="5">
    <location>
        <position position="433"/>
    </location>
</feature>
<feature type="glycosylation site" description="N-linked (GlcNAc...) asparagine; by host" evidence="5">
    <location>
        <position position="457"/>
    </location>
</feature>
<feature type="disulfide bond" description="Interchain (with C-195)" evidence="4">
    <location>
        <position position="64"/>
    </location>
</feature>
<feature type="disulfide bond" description="Interchain (with C-68)" evidence="4">
    <location>
        <position position="185"/>
    </location>
</feature>
<feature type="disulfide bond" evidence="4">
    <location>
        <begin position="324"/>
        <end position="333"/>
    </location>
</feature>
<feature type="disulfide bond" evidence="4">
    <location>
        <begin position="348"/>
        <end position="356"/>
    </location>
</feature>
<feature type="disulfide bond" evidence="4">
    <location>
        <begin position="380"/>
        <end position="385"/>
    </location>
</feature>
<feature type="disulfide bond" evidence="4">
    <location>
        <begin position="387"/>
        <end position="410"/>
    </location>
</feature>
<gene>
    <name type="primary">F</name>
</gene>
<keyword id="KW-0165">Cleavage on pair of basic residues</keyword>
<keyword id="KW-0175">Coiled coil</keyword>
<keyword id="KW-1015">Disulfide bond</keyword>
<keyword id="KW-1169">Fusion of virus membrane with host cell membrane</keyword>
<keyword id="KW-1168">Fusion of virus membrane with host membrane</keyword>
<keyword id="KW-0325">Glycoprotein</keyword>
<keyword id="KW-1032">Host cell membrane</keyword>
<keyword id="KW-1043">Host membrane</keyword>
<keyword id="KW-0472">Membrane</keyword>
<keyword id="KW-0732">Signal</keyword>
<keyword id="KW-0812">Transmembrane</keyword>
<keyword id="KW-1133">Transmembrane helix</keyword>
<keyword id="KW-0261">Viral envelope protein</keyword>
<keyword id="KW-1162">Viral penetration into host cytoplasm</keyword>
<keyword id="KW-0946">Virion</keyword>
<keyword id="KW-1160">Virus entry into host cell</keyword>
<organismHost>
    <name type="scientific">Homo sapiens</name>
    <name type="common">Human</name>
    <dbReference type="NCBI Taxonomy" id="9606"/>
</organismHost>
<reference key="1">
    <citation type="journal article" date="2005" name="Virus Res.">
        <title>Genetic characterization of L-Zagreb mumps vaccine strain.</title>
        <authorList>
            <person name="Ivancic J."/>
            <person name="Kosutic Gulija T."/>
            <person name="Forcic D."/>
            <person name="Baricevic M."/>
            <person name="Jug R."/>
            <person name="Mesko-Prejac M."/>
            <person name="Mazuran R."/>
        </authorList>
    </citation>
    <scope>NUCLEOTIDE SEQUENCE [GENOMIC RNA]</scope>
    <source>
        <strain>L-Zagreb</strain>
        <strain>L-Zagreb vaccine</strain>
    </source>
</reference>
<reference key="2">
    <citation type="submission" date="2006-01" db="EMBL/GenBank/DDBJ databases">
        <title>Mumps virus F gene L.Zagreb vaccine strain.</title>
        <authorList>
            <person name="Mallya A.D."/>
            <person name="Deobagkar D.D."/>
            <person name="Dhere R.M."/>
            <person name="Kapre S.V."/>
        </authorList>
    </citation>
    <scope>NUCLEOTIDE SEQUENCE [GENOMIC RNA]</scope>
    <source>
        <strain>L-Zagreb vaccine</strain>
    </source>
</reference>
<reference key="3">
    <citation type="journal article" date="2018" name="Virol. J.">
        <title>Mass spectrometry-based investigation of measles and mumps virus proteome.</title>
        <authorList>
            <person name="Sviben D."/>
            <person name="Forcic D."/>
            <person name="Halassy B."/>
            <person name="Allmaier G."/>
            <person name="Marchetti-Deschmann M."/>
            <person name="Brgles M."/>
        </authorList>
    </citation>
    <scope>IDENTIFICATION BY MASS SPECTROMETRY</scope>
    <scope>SUBCELLULAR LOCATION</scope>
    <source>
        <strain>L-Zagreb vaccine</strain>
    </source>
</reference>
<reference key="4">
    <citation type="journal article" date="2020" name="J. Virol.">
        <title>The Amino Acid at Position 8 of the Proteolytic Cleavage Site of the Mumps Virus Fusion Protein Affects Viral Proteolysis and Fusogenicity.</title>
        <authorList>
            <person name="Huettl S."/>
            <person name="Hoffmann M."/>
            <person name="Steinmetzer T."/>
            <person name="Sauder C."/>
            <person name="Krueger N."/>
        </authorList>
    </citation>
    <scope>PROTEOLYTIC CLEAVAGE (FUSION GLYCOPROTEIN F0)</scope>
</reference>
<sequence length="538" mass="58730">MKAFSVTCLGFAVFSSSICVNINILQQIGYIKQQVRQLSYYSQSSSSYIVVKLLPNIQPTDNSCEFKSVTQYNKTLSNLLLPIAENINNIASPSPGSRRHKRFAGIAIGIAALGVATAAQVTAAVSLVQAQTNARAIAAMKNSIQATNRAIFEVKEGTQQLAIAVQAIQDHINTIMNTQLNNMTCQILDNQLATFLGLYLTELTTVFQPQLINPALSPISIQALRSLLGSMTPAVVQATLSTSISAAEILSAGLMEGQIVSVLLDEMQMIVKVNIPTIVTQSNALVIDFYSISSFINNQESIIQLPDRILEIGNEQWSYPAKNCKLTRHHIFCQYNEAERLSLESKLCLAGNISACVFSPIAGSYMRRFVALDGTIVANCRSLTCLCKSPSYPIYQPDHHAVTTIDLTACQTLSLDGLDFSIVSLSNITYAENLTISLSQTINTQPIDISTELSKVNASLQNAVKYIKESNHQLLSVSVNSKIGAIIVTALVLSILSIIISLLFCCWAYIATKEIRRINFKTNHINTISSSVDDLIRY</sequence>
<protein>
    <recommendedName>
        <fullName>Fusion glycoprotein F0</fullName>
    </recommendedName>
    <component>
        <recommendedName>
            <fullName>Fusion glycoprotein F2</fullName>
        </recommendedName>
    </component>
    <component>
        <recommendedName>
            <fullName>Fusion glycoprotein F1</fullName>
        </recommendedName>
    </component>
</protein>
<proteinExistence type="evidence at protein level"/>
<name>FUS_MUMPZ</name>
<evidence type="ECO:0000250" key="1"/>
<evidence type="ECO:0000250" key="2">
    <source>
        <dbReference type="UniProtKB" id="P09458"/>
    </source>
</evidence>
<evidence type="ECO:0000250" key="3">
    <source>
        <dbReference type="UniProtKB" id="P11236"/>
    </source>
</evidence>
<evidence type="ECO:0000250" key="4">
    <source>
        <dbReference type="UniProtKB" id="Q786F3"/>
    </source>
</evidence>
<evidence type="ECO:0000255" key="5"/>
<evidence type="ECO:0000269" key="6">
    <source>
    </source>
</evidence>
<evidence type="ECO:0000305" key="7"/>
<evidence type="ECO:0000305" key="8">
    <source>
    </source>
</evidence>
<accession>Q5SC53</accession>
<dbReference type="EMBL" id="AY685920">
    <property type="protein sequence ID" value="AAV65061.1"/>
    <property type="molecule type" value="Genomic_RNA"/>
</dbReference>
<dbReference type="EMBL" id="AY685921">
    <property type="protein sequence ID" value="AAV65070.1"/>
    <property type="molecule type" value="Genomic_RNA"/>
</dbReference>
<dbReference type="EMBL" id="AM181760">
    <property type="protein sequence ID" value="CAJ57705.1"/>
    <property type="molecule type" value="Genomic_RNA"/>
</dbReference>
<dbReference type="SMR" id="Q5SC53"/>
<dbReference type="Proteomes" id="UP000130023">
    <property type="component" value="Genome"/>
</dbReference>
<dbReference type="Proteomes" id="UP000181577">
    <property type="component" value="Genome"/>
</dbReference>
<dbReference type="GO" id="GO:0020002">
    <property type="term" value="C:host cell plasma membrane"/>
    <property type="evidence" value="ECO:0007669"/>
    <property type="project" value="UniProtKB-SubCell"/>
</dbReference>
<dbReference type="GO" id="GO:0016020">
    <property type="term" value="C:membrane"/>
    <property type="evidence" value="ECO:0007669"/>
    <property type="project" value="UniProtKB-KW"/>
</dbReference>
<dbReference type="GO" id="GO:0019031">
    <property type="term" value="C:viral envelope"/>
    <property type="evidence" value="ECO:0007669"/>
    <property type="project" value="UniProtKB-KW"/>
</dbReference>
<dbReference type="GO" id="GO:0055036">
    <property type="term" value="C:virion membrane"/>
    <property type="evidence" value="ECO:0007669"/>
    <property type="project" value="UniProtKB-SubCell"/>
</dbReference>
<dbReference type="GO" id="GO:0019064">
    <property type="term" value="P:fusion of virus membrane with host plasma membrane"/>
    <property type="evidence" value="ECO:0007669"/>
    <property type="project" value="UniProtKB-KW"/>
</dbReference>
<dbReference type="GO" id="GO:0046718">
    <property type="term" value="P:symbiont entry into host cell"/>
    <property type="evidence" value="ECO:0007669"/>
    <property type="project" value="UniProtKB-KW"/>
</dbReference>
<dbReference type="Gene3D" id="1.10.287.2480">
    <property type="match status" value="1"/>
</dbReference>
<dbReference type="Gene3D" id="6.10.10.110">
    <property type="match status" value="1"/>
</dbReference>
<dbReference type="Gene3D" id="2.60.40.1690">
    <property type="entry name" value="Head and neck region of the ectodomain of NDV fusion glycoprotein"/>
    <property type="match status" value="1"/>
</dbReference>
<dbReference type="Gene3D" id="2.40.490.10">
    <property type="entry name" value="Newcastle disease virus like domain"/>
    <property type="match status" value="1"/>
</dbReference>
<dbReference type="Gene3D" id="1.10.287.770">
    <property type="entry name" value="YojJ-like"/>
    <property type="match status" value="1"/>
</dbReference>
<dbReference type="InterPro" id="IPR000776">
    <property type="entry name" value="Fusion_F0_Paramyxovir"/>
</dbReference>
<dbReference type="Pfam" id="PF00523">
    <property type="entry name" value="Fusion_gly"/>
    <property type="match status" value="1"/>
</dbReference>
<dbReference type="SUPFAM" id="SSF69922">
    <property type="entry name" value="Head and neck region of the ectodomain of NDV fusion glycoprotein"/>
    <property type="match status" value="1"/>
</dbReference>
<dbReference type="SUPFAM" id="SSF58069">
    <property type="entry name" value="Virus ectodomain"/>
    <property type="match status" value="1"/>
</dbReference>
<organism>
    <name type="scientific">Mumps virus genotype N (strain L-Zagreb vaccine)</name>
    <name type="common">MuV</name>
    <dbReference type="NCBI Taxonomy" id="301186"/>
    <lineage>
        <taxon>Viruses</taxon>
        <taxon>Riboviria</taxon>
        <taxon>Orthornavirae</taxon>
        <taxon>Negarnaviricota</taxon>
        <taxon>Haploviricotina</taxon>
        <taxon>Monjiviricetes</taxon>
        <taxon>Mononegavirales</taxon>
        <taxon>Paramyxoviridae</taxon>
        <taxon>Rubulavirinae</taxon>
        <taxon>Orthorubulavirus</taxon>
        <taxon>Orthorubulavirus parotitidis</taxon>
        <taxon>Mumps orthorubulavirus</taxon>
    </lineage>
</organism>
<comment type="function">
    <text evidence="1">Class I viral fusion protein. Under the current model, the protein has at least 3 conformational states: pre-fusion native state, pre-hairpin intermediate state, and post-fusion hairpin state. During viral and plasma cell membrane fusion, the heptad repeat (HR) regions assume a trimer-of-hairpins structure, positioning the fusion peptide in close proximity to the C-terminal region of the ectodomain. The formation of this structure appears to drive apposition and subsequent fusion of viral and plasma cell membranes. Directs fusion of viral and cellular membranes leading to delivery of the nucleocapsid into the cytoplasm. This fusion is pH independent and occurs directly at the outer cell membrane. The trimer of F1-F2 (F protein) probably interacts with HN at the virion surface. Upon HN binding to its cellular receptor, the hydrophobic fusion peptide is unmasked and interacts with the cellular membrane, inducing the fusion between cell and virion membranes. Later in infection, F proteins expressed at the plasma membrane of infected cells could mediate fusion with adjacent cells to form syncytia, a cytopathic effect that could lead to tissue necrosis (By similarity).</text>
</comment>
<comment type="subunit">
    <text evidence="3">Homotrimer; disulfide-linked F1-F2. Interacts with host LAMP1; LAMP2 and LAMP3; these interactions promote the cleavage of the viral fusion protein F.</text>
</comment>
<comment type="subcellular location">
    <subcellularLocation>
        <location evidence="8">Virion membrane</location>
        <topology evidence="5">Single-pass type I membrane protein</topology>
    </subcellularLocation>
    <subcellularLocation>
        <location evidence="7">Host cell membrane</location>
        <topology evidence="5">Single-pass membrane protein</topology>
    </subcellularLocation>
</comment>
<comment type="domain">
    <text evidence="3">The 2 coiled coil regions form a stable six-helix bundle.</text>
</comment>
<comment type="PTM">
    <text evidence="6">The inactive precursor F0 is glycosylated and proteolytically cleaved into F1 and F2 to be functionally active (PubMed:32907974). The cleavage is mediated by cellular proteases including host FURIN during the transport and maturation of the polypeptide (PubMed:32907974).</text>
</comment>
<comment type="similarity">
    <text evidence="7">Belongs to the paramyxoviruses fusion glycoprotein family.</text>
</comment>